<organism>
    <name type="scientific">Drosophila erecta</name>
    <name type="common">Fruit fly</name>
    <dbReference type="NCBI Taxonomy" id="7220"/>
    <lineage>
        <taxon>Eukaryota</taxon>
        <taxon>Metazoa</taxon>
        <taxon>Ecdysozoa</taxon>
        <taxon>Arthropoda</taxon>
        <taxon>Hexapoda</taxon>
        <taxon>Insecta</taxon>
        <taxon>Pterygota</taxon>
        <taxon>Neoptera</taxon>
        <taxon>Endopterygota</taxon>
        <taxon>Diptera</taxon>
        <taxon>Brachycera</taxon>
        <taxon>Muscomorpha</taxon>
        <taxon>Ephydroidea</taxon>
        <taxon>Drosophilidae</taxon>
        <taxon>Drosophila</taxon>
        <taxon>Sophophora</taxon>
    </lineage>
</organism>
<sequence length="129" mass="14166">MNSATSLMCFALLLISPLCMGYTAEDREADSRRVAEIIKNSQDDNSKINSIQELLDIYKRLYPSLTPEERESIDNFVNEHTDEVLVDGVPSQGGRKTKFAGKILSEATKGVATGFFEELGSKLAGLFTG</sequence>
<evidence type="ECO:0000250" key="1">
    <source>
        <dbReference type="UniProtKB" id="Q9VDH4"/>
    </source>
</evidence>
<evidence type="ECO:0000255" key="2"/>
<evidence type="ECO:0000312" key="3">
    <source>
        <dbReference type="EMBL" id="EDV48325.1"/>
    </source>
</evidence>
<gene>
    <name type="primary">TotB2</name>
    <name type="ORF">GG24221</name>
</gene>
<protein>
    <recommendedName>
        <fullName>Protein Turandot B2</fullName>
    </recommendedName>
</protein>
<comment type="function">
    <text evidence="1">A humoral factor that may play a role in stress tolerance.</text>
</comment>
<comment type="subcellular location">
    <subcellularLocation>
        <location evidence="1">Secreted</location>
    </subcellularLocation>
</comment>
<comment type="similarity">
    <text evidence="2">Belongs to the Turandot family.</text>
</comment>
<name>TOTB2_DROER</name>
<accession>B3P311</accession>
<reference evidence="3" key="1">
    <citation type="journal article" date="2007" name="Nature">
        <title>Evolution of genes and genomes on the Drosophila phylogeny.</title>
        <authorList>
            <consortium name="Drosophila 12 genomes consortium"/>
        </authorList>
    </citation>
    <scope>NUCLEOTIDE SEQUENCE [LARGE SCALE GENOMIC DNA]</scope>
    <source>
        <strain evidence="3">Tucson 14021-0224.01</strain>
    </source>
</reference>
<dbReference type="EMBL" id="CH954181">
    <property type="protein sequence ID" value="EDV48325.1"/>
    <property type="molecule type" value="Genomic_DNA"/>
</dbReference>
<dbReference type="SMR" id="B3P311"/>
<dbReference type="EnsemblMetazoa" id="FBtr0144275">
    <property type="protein sequence ID" value="FBpp0142767"/>
    <property type="gene ID" value="FBgn0116353"/>
</dbReference>
<dbReference type="EnsemblMetazoa" id="XM_001979331.3">
    <property type="protein sequence ID" value="XP_001979367.1"/>
    <property type="gene ID" value="LOC6553467"/>
</dbReference>
<dbReference type="GeneID" id="6553467"/>
<dbReference type="KEGG" id="der:6553467"/>
<dbReference type="HOGENOM" id="CLU_152780_0_0_1"/>
<dbReference type="OMA" id="CCAYSDA"/>
<dbReference type="OrthoDB" id="7861285at2759"/>
<dbReference type="PhylomeDB" id="B3P311"/>
<dbReference type="Proteomes" id="UP000008711">
    <property type="component" value="Unassembled WGS sequence"/>
</dbReference>
<dbReference type="GO" id="GO:0005615">
    <property type="term" value="C:extracellular space"/>
    <property type="evidence" value="ECO:0000250"/>
    <property type="project" value="UniProtKB"/>
</dbReference>
<dbReference type="GO" id="GO:0034605">
    <property type="term" value="P:cellular response to heat"/>
    <property type="evidence" value="ECO:0007669"/>
    <property type="project" value="UniProtKB-ARBA"/>
</dbReference>
<dbReference type="GO" id="GO:0045087">
    <property type="term" value="P:innate immune response"/>
    <property type="evidence" value="ECO:0007669"/>
    <property type="project" value="UniProtKB-KW"/>
</dbReference>
<dbReference type="GO" id="GO:0009617">
    <property type="term" value="P:response to bacterium"/>
    <property type="evidence" value="ECO:0007669"/>
    <property type="project" value="UniProtKB-ARBA"/>
</dbReference>
<dbReference type="GO" id="GO:0009408">
    <property type="term" value="P:response to heat"/>
    <property type="evidence" value="ECO:0000250"/>
    <property type="project" value="UniProtKB"/>
</dbReference>
<dbReference type="GO" id="GO:0009411">
    <property type="term" value="P:response to UV"/>
    <property type="evidence" value="ECO:0000250"/>
    <property type="project" value="UniProtKB"/>
</dbReference>
<dbReference type="InterPro" id="IPR010825">
    <property type="entry name" value="Turandot"/>
</dbReference>
<dbReference type="Pfam" id="PF07240">
    <property type="entry name" value="Turandot"/>
    <property type="match status" value="1"/>
</dbReference>
<proteinExistence type="inferred from homology"/>
<keyword id="KW-0391">Immunity</keyword>
<keyword id="KW-0399">Innate immunity</keyword>
<keyword id="KW-0964">Secreted</keyword>
<keyword id="KW-0732">Signal</keyword>
<feature type="signal peptide" evidence="2">
    <location>
        <begin position="1"/>
        <end position="21"/>
    </location>
</feature>
<feature type="chain" id="PRO_0000354979" description="Protein Turandot B2">
    <location>
        <begin position="22"/>
        <end position="129"/>
    </location>
</feature>